<keyword id="KW-0378">Hydrolase</keyword>
<keyword id="KW-0479">Metal-binding</keyword>
<keyword id="KW-0862">Zinc</keyword>
<name>CDD_YERPY</name>
<sequence>MQARFHTSWAELPASLQFALEPILSAENFPAMLTAEQVKTVKNISGLDDDALAFALLPLATACALTPISHFNVGAIARGKSGNFYFGANMEFRGVPLQQTIHAEQCAVTHAWLRGETNLVAITVNYTPCGHCRQFMNELNSGSELHIHLPGRPPSTLGQYLPDSFGPTDLAITTLLMDPVNHGYTLAETDPLTQAALNAANHSHAPYSQSHSGVALETTNGKIYAGRYAENAAFNPSLPPLQAALILANITGENCASIRRAVLVEGHNAVTSQWDTTLATLNALGCSAVKRVTF</sequence>
<accession>B1JPZ5</accession>
<protein>
    <recommendedName>
        <fullName evidence="1">Cytidine deaminase</fullName>
        <ecNumber evidence="1">3.5.4.5</ecNumber>
    </recommendedName>
    <alternativeName>
        <fullName evidence="1">Cytidine aminohydrolase</fullName>
        <shortName evidence="1">CDA</shortName>
    </alternativeName>
</protein>
<organism>
    <name type="scientific">Yersinia pseudotuberculosis serotype O:3 (strain YPIII)</name>
    <dbReference type="NCBI Taxonomy" id="502800"/>
    <lineage>
        <taxon>Bacteria</taxon>
        <taxon>Pseudomonadati</taxon>
        <taxon>Pseudomonadota</taxon>
        <taxon>Gammaproteobacteria</taxon>
        <taxon>Enterobacterales</taxon>
        <taxon>Yersiniaceae</taxon>
        <taxon>Yersinia</taxon>
    </lineage>
</organism>
<feature type="chain" id="PRO_1000147121" description="Cytidine deaminase">
    <location>
        <begin position="1"/>
        <end position="294"/>
    </location>
</feature>
<feature type="domain" description="CMP/dCMP-type deaminase 1" evidence="2">
    <location>
        <begin position="48"/>
        <end position="168"/>
    </location>
</feature>
<feature type="domain" description="CMP/dCMP-type deaminase 2" evidence="2">
    <location>
        <begin position="187"/>
        <end position="294"/>
    </location>
</feature>
<feature type="active site" description="Proton donor" evidence="1">
    <location>
        <position position="104"/>
    </location>
</feature>
<feature type="binding site" evidence="1">
    <location>
        <begin position="89"/>
        <end position="91"/>
    </location>
    <ligand>
        <name>substrate</name>
    </ligand>
</feature>
<feature type="binding site" evidence="1">
    <location>
        <position position="102"/>
    </location>
    <ligand>
        <name>Zn(2+)</name>
        <dbReference type="ChEBI" id="CHEBI:29105"/>
        <note>catalytic</note>
    </ligand>
</feature>
<feature type="binding site" evidence="1">
    <location>
        <position position="129"/>
    </location>
    <ligand>
        <name>Zn(2+)</name>
        <dbReference type="ChEBI" id="CHEBI:29105"/>
        <note>catalytic</note>
    </ligand>
</feature>
<feature type="binding site" evidence="1">
    <location>
        <position position="132"/>
    </location>
    <ligand>
        <name>Zn(2+)</name>
        <dbReference type="ChEBI" id="CHEBI:29105"/>
        <note>catalytic</note>
    </ligand>
</feature>
<dbReference type="EC" id="3.5.4.5" evidence="1"/>
<dbReference type="EMBL" id="CP000950">
    <property type="protein sequence ID" value="ACA68838.1"/>
    <property type="molecule type" value="Genomic_DNA"/>
</dbReference>
<dbReference type="RefSeq" id="WP_002211969.1">
    <property type="nucleotide sequence ID" value="NZ_CP009792.1"/>
</dbReference>
<dbReference type="SMR" id="B1JPZ5"/>
<dbReference type="GeneID" id="57977056"/>
<dbReference type="KEGG" id="ypy:YPK_2561"/>
<dbReference type="PATRIC" id="fig|502800.11.peg.3257"/>
<dbReference type="GO" id="GO:0005829">
    <property type="term" value="C:cytosol"/>
    <property type="evidence" value="ECO:0007669"/>
    <property type="project" value="TreeGrafter"/>
</dbReference>
<dbReference type="GO" id="GO:0004126">
    <property type="term" value="F:cytidine deaminase activity"/>
    <property type="evidence" value="ECO:0007669"/>
    <property type="project" value="UniProtKB-UniRule"/>
</dbReference>
<dbReference type="GO" id="GO:0042802">
    <property type="term" value="F:identical protein binding"/>
    <property type="evidence" value="ECO:0007669"/>
    <property type="project" value="UniProtKB-ARBA"/>
</dbReference>
<dbReference type="GO" id="GO:0008270">
    <property type="term" value="F:zinc ion binding"/>
    <property type="evidence" value="ECO:0007669"/>
    <property type="project" value="UniProtKB-UniRule"/>
</dbReference>
<dbReference type="GO" id="GO:0009972">
    <property type="term" value="P:cytidine deamination"/>
    <property type="evidence" value="ECO:0007669"/>
    <property type="project" value="InterPro"/>
</dbReference>
<dbReference type="CDD" id="cd01283">
    <property type="entry name" value="cytidine_deaminase"/>
    <property type="match status" value="2"/>
</dbReference>
<dbReference type="FunFam" id="3.40.140.10:FF:000006">
    <property type="entry name" value="Cytidine deaminase"/>
    <property type="match status" value="1"/>
</dbReference>
<dbReference type="FunFam" id="3.40.140.10:FF:000007">
    <property type="entry name" value="Cytidine deaminase"/>
    <property type="match status" value="1"/>
</dbReference>
<dbReference type="Gene3D" id="3.40.140.10">
    <property type="entry name" value="Cytidine Deaminase, domain 2"/>
    <property type="match status" value="2"/>
</dbReference>
<dbReference type="HAMAP" id="MF_01558">
    <property type="entry name" value="Cyt_deam"/>
    <property type="match status" value="1"/>
</dbReference>
<dbReference type="InterPro" id="IPR016192">
    <property type="entry name" value="APOBEC/CMP_deaminase_Zn-bd"/>
</dbReference>
<dbReference type="InterPro" id="IPR002125">
    <property type="entry name" value="CMP_dCMP_dom"/>
</dbReference>
<dbReference type="InterPro" id="IPR013171">
    <property type="entry name" value="Cyd/dCyd_deaminase_Zn-bd"/>
</dbReference>
<dbReference type="InterPro" id="IPR050202">
    <property type="entry name" value="Cyt/Deoxycyt_deaminase"/>
</dbReference>
<dbReference type="InterPro" id="IPR006263">
    <property type="entry name" value="Cyt_deam_dimer"/>
</dbReference>
<dbReference type="InterPro" id="IPR016193">
    <property type="entry name" value="Cytidine_deaminase-like"/>
</dbReference>
<dbReference type="InterPro" id="IPR020797">
    <property type="entry name" value="Cytidine_deaminase_bacteria"/>
</dbReference>
<dbReference type="NCBIfam" id="TIGR01355">
    <property type="entry name" value="cyt_deam_dimer"/>
    <property type="match status" value="1"/>
</dbReference>
<dbReference type="NCBIfam" id="NF006537">
    <property type="entry name" value="PRK09027.1"/>
    <property type="match status" value="1"/>
</dbReference>
<dbReference type="PANTHER" id="PTHR11644">
    <property type="entry name" value="CYTIDINE DEAMINASE"/>
    <property type="match status" value="1"/>
</dbReference>
<dbReference type="PANTHER" id="PTHR11644:SF2">
    <property type="entry name" value="CYTIDINE DEAMINASE"/>
    <property type="match status" value="1"/>
</dbReference>
<dbReference type="Pfam" id="PF00383">
    <property type="entry name" value="dCMP_cyt_deam_1"/>
    <property type="match status" value="1"/>
</dbReference>
<dbReference type="Pfam" id="PF08211">
    <property type="entry name" value="dCMP_cyt_deam_2"/>
    <property type="match status" value="1"/>
</dbReference>
<dbReference type="PIRSF" id="PIRSF006334">
    <property type="entry name" value="Cdd_plus_pseudo"/>
    <property type="match status" value="1"/>
</dbReference>
<dbReference type="SUPFAM" id="SSF53927">
    <property type="entry name" value="Cytidine deaminase-like"/>
    <property type="match status" value="2"/>
</dbReference>
<dbReference type="PROSITE" id="PS00903">
    <property type="entry name" value="CYT_DCMP_DEAMINASES_1"/>
    <property type="match status" value="1"/>
</dbReference>
<dbReference type="PROSITE" id="PS51747">
    <property type="entry name" value="CYT_DCMP_DEAMINASES_2"/>
    <property type="match status" value="2"/>
</dbReference>
<proteinExistence type="inferred from homology"/>
<gene>
    <name evidence="1" type="primary">cdd</name>
    <name type="ordered locus">YPK_2561</name>
</gene>
<reference key="1">
    <citation type="submission" date="2008-02" db="EMBL/GenBank/DDBJ databases">
        <title>Complete sequence of Yersinia pseudotuberculosis YPIII.</title>
        <authorList>
            <consortium name="US DOE Joint Genome Institute"/>
            <person name="Copeland A."/>
            <person name="Lucas S."/>
            <person name="Lapidus A."/>
            <person name="Glavina del Rio T."/>
            <person name="Dalin E."/>
            <person name="Tice H."/>
            <person name="Bruce D."/>
            <person name="Goodwin L."/>
            <person name="Pitluck S."/>
            <person name="Munk A.C."/>
            <person name="Brettin T."/>
            <person name="Detter J.C."/>
            <person name="Han C."/>
            <person name="Tapia R."/>
            <person name="Schmutz J."/>
            <person name="Larimer F."/>
            <person name="Land M."/>
            <person name="Hauser L."/>
            <person name="Challacombe J.F."/>
            <person name="Green L."/>
            <person name="Lindler L.E."/>
            <person name="Nikolich M.P."/>
            <person name="Richardson P."/>
        </authorList>
    </citation>
    <scope>NUCLEOTIDE SEQUENCE [LARGE SCALE GENOMIC DNA]</scope>
    <source>
        <strain>YPIII</strain>
    </source>
</reference>
<comment type="function">
    <text evidence="1">This enzyme scavenges exogenous and endogenous cytidine and 2'-deoxycytidine for UMP synthesis.</text>
</comment>
<comment type="catalytic activity">
    <reaction evidence="1">
        <text>cytidine + H2O + H(+) = uridine + NH4(+)</text>
        <dbReference type="Rhea" id="RHEA:16069"/>
        <dbReference type="ChEBI" id="CHEBI:15377"/>
        <dbReference type="ChEBI" id="CHEBI:15378"/>
        <dbReference type="ChEBI" id="CHEBI:16704"/>
        <dbReference type="ChEBI" id="CHEBI:17562"/>
        <dbReference type="ChEBI" id="CHEBI:28938"/>
        <dbReference type="EC" id="3.5.4.5"/>
    </reaction>
</comment>
<comment type="catalytic activity">
    <reaction evidence="1">
        <text>2'-deoxycytidine + H2O + H(+) = 2'-deoxyuridine + NH4(+)</text>
        <dbReference type="Rhea" id="RHEA:13433"/>
        <dbReference type="ChEBI" id="CHEBI:15377"/>
        <dbReference type="ChEBI" id="CHEBI:15378"/>
        <dbReference type="ChEBI" id="CHEBI:15698"/>
        <dbReference type="ChEBI" id="CHEBI:16450"/>
        <dbReference type="ChEBI" id="CHEBI:28938"/>
        <dbReference type="EC" id="3.5.4.5"/>
    </reaction>
</comment>
<comment type="cofactor">
    <cofactor evidence="1">
        <name>Zn(2+)</name>
        <dbReference type="ChEBI" id="CHEBI:29105"/>
    </cofactor>
    <text evidence="1">Binds 1 zinc ion.</text>
</comment>
<comment type="subunit">
    <text evidence="1">Homodimer.</text>
</comment>
<comment type="similarity">
    <text evidence="1">Belongs to the cytidine and deoxycytidylate deaminase family.</text>
</comment>
<evidence type="ECO:0000255" key="1">
    <source>
        <dbReference type="HAMAP-Rule" id="MF_01558"/>
    </source>
</evidence>
<evidence type="ECO:0000255" key="2">
    <source>
        <dbReference type="PROSITE-ProRule" id="PRU01083"/>
    </source>
</evidence>